<keyword id="KW-0963">Cytoplasm</keyword>
<keyword id="KW-0285">Flavoprotein</keyword>
<keyword id="KW-0288">FMN</keyword>
<keyword id="KW-0413">Isomerase</keyword>
<keyword id="KW-0414">Isoprene biosynthesis</keyword>
<keyword id="KW-0460">Magnesium</keyword>
<keyword id="KW-0479">Metal-binding</keyword>
<keyword id="KW-0521">NADP</keyword>
<sequence>MTNRKDDHIKYALKYQSPYNAFDDIELIHHSLPSYDLSDIDLSTHFAGQDFDFPFYINAMTGGSQKGKAVNEKLAKVAAATGIVMVTGSYSAALKNPNDDSYRLHEVADNLKLATNIGLDKPVALGQQTVQEMQPLFLQVHVNVMQELLMPEGERVFHTWKKHLAEYASQIPVPVILKEVGFGMDVNSIKLAHDLGIQTFDISGRGGTSFAYIENQRGGDRSYLNDWGQTTVQCLLNAQGLMDQVEILASGGVRHPLDMIKCFVLGARAVGLSRTVLELVEKYPTERVIAIVNGWKEELKIIMCALDCKTIKELKGVDYLLYGRLQQVN</sequence>
<accession>Q48U28</accession>
<proteinExistence type="inferred from homology"/>
<dbReference type="EC" id="5.3.3.2" evidence="1"/>
<dbReference type="EMBL" id="CP000056">
    <property type="protein sequence ID" value="AAX71778.1"/>
    <property type="status" value="ALT_INIT"/>
    <property type="molecule type" value="Genomic_DNA"/>
</dbReference>
<dbReference type="RefSeq" id="WP_010922169.1">
    <property type="nucleotide sequence ID" value="NC_007296.2"/>
</dbReference>
<dbReference type="SMR" id="Q48U28"/>
<dbReference type="GeneID" id="69901016"/>
<dbReference type="KEGG" id="spb:M28_Spy0665"/>
<dbReference type="HOGENOM" id="CLU_065515_0_0_9"/>
<dbReference type="GO" id="GO:0005737">
    <property type="term" value="C:cytoplasm"/>
    <property type="evidence" value="ECO:0007669"/>
    <property type="project" value="UniProtKB-SubCell"/>
</dbReference>
<dbReference type="GO" id="GO:0010181">
    <property type="term" value="F:FMN binding"/>
    <property type="evidence" value="ECO:0007669"/>
    <property type="project" value="UniProtKB-UniRule"/>
</dbReference>
<dbReference type="GO" id="GO:0004452">
    <property type="term" value="F:isopentenyl-diphosphate delta-isomerase activity"/>
    <property type="evidence" value="ECO:0007669"/>
    <property type="project" value="UniProtKB-UniRule"/>
</dbReference>
<dbReference type="GO" id="GO:0000287">
    <property type="term" value="F:magnesium ion binding"/>
    <property type="evidence" value="ECO:0007669"/>
    <property type="project" value="UniProtKB-UniRule"/>
</dbReference>
<dbReference type="GO" id="GO:0070402">
    <property type="term" value="F:NADPH binding"/>
    <property type="evidence" value="ECO:0007669"/>
    <property type="project" value="UniProtKB-UniRule"/>
</dbReference>
<dbReference type="GO" id="GO:0016491">
    <property type="term" value="F:oxidoreductase activity"/>
    <property type="evidence" value="ECO:0007669"/>
    <property type="project" value="InterPro"/>
</dbReference>
<dbReference type="GO" id="GO:0008299">
    <property type="term" value="P:isoprenoid biosynthetic process"/>
    <property type="evidence" value="ECO:0007669"/>
    <property type="project" value="UniProtKB-UniRule"/>
</dbReference>
<dbReference type="CDD" id="cd02811">
    <property type="entry name" value="IDI-2_FMN"/>
    <property type="match status" value="1"/>
</dbReference>
<dbReference type="Gene3D" id="3.20.20.70">
    <property type="entry name" value="Aldolase class I"/>
    <property type="match status" value="1"/>
</dbReference>
<dbReference type="HAMAP" id="MF_00354">
    <property type="entry name" value="Idi_2"/>
    <property type="match status" value="1"/>
</dbReference>
<dbReference type="InterPro" id="IPR013785">
    <property type="entry name" value="Aldolase_TIM"/>
</dbReference>
<dbReference type="InterPro" id="IPR000262">
    <property type="entry name" value="FMN-dep_DH"/>
</dbReference>
<dbReference type="InterPro" id="IPR011179">
    <property type="entry name" value="IPdP_isomerase"/>
</dbReference>
<dbReference type="NCBIfam" id="TIGR02151">
    <property type="entry name" value="IPP_isom_2"/>
    <property type="match status" value="1"/>
</dbReference>
<dbReference type="PANTHER" id="PTHR43665">
    <property type="entry name" value="ISOPENTENYL-DIPHOSPHATE DELTA-ISOMERASE"/>
    <property type="match status" value="1"/>
</dbReference>
<dbReference type="PANTHER" id="PTHR43665:SF1">
    <property type="entry name" value="ISOPENTENYL-DIPHOSPHATE DELTA-ISOMERASE"/>
    <property type="match status" value="1"/>
</dbReference>
<dbReference type="Pfam" id="PF01070">
    <property type="entry name" value="FMN_dh"/>
    <property type="match status" value="2"/>
</dbReference>
<dbReference type="PIRSF" id="PIRSF003314">
    <property type="entry name" value="IPP_isomerase"/>
    <property type="match status" value="1"/>
</dbReference>
<dbReference type="SUPFAM" id="SSF51395">
    <property type="entry name" value="FMN-linked oxidoreductases"/>
    <property type="match status" value="1"/>
</dbReference>
<feature type="chain" id="PRO_0000229513" description="Isopentenyl-diphosphate delta-isomerase">
    <location>
        <begin position="1"/>
        <end position="329"/>
    </location>
</feature>
<feature type="binding site" evidence="1">
    <location>
        <begin position="4"/>
        <end position="5"/>
    </location>
    <ligand>
        <name>substrate</name>
    </ligand>
</feature>
<feature type="binding site" evidence="1">
    <location>
        <begin position="59"/>
        <end position="61"/>
    </location>
    <ligand>
        <name>FMN</name>
        <dbReference type="ChEBI" id="CHEBI:58210"/>
    </ligand>
</feature>
<feature type="binding site" evidence="1">
    <location>
        <position position="89"/>
    </location>
    <ligand>
        <name>FMN</name>
        <dbReference type="ChEBI" id="CHEBI:58210"/>
    </ligand>
</feature>
<feature type="binding site" evidence="1">
    <location>
        <position position="116"/>
    </location>
    <ligand>
        <name>FMN</name>
        <dbReference type="ChEBI" id="CHEBI:58210"/>
    </ligand>
</feature>
<feature type="binding site" evidence="1">
    <location>
        <position position="146"/>
    </location>
    <ligand>
        <name>substrate</name>
    </ligand>
</feature>
<feature type="binding site" evidence="1">
    <location>
        <position position="147"/>
    </location>
    <ligand>
        <name>Mg(2+)</name>
        <dbReference type="ChEBI" id="CHEBI:18420"/>
    </ligand>
</feature>
<feature type="binding site" evidence="1">
    <location>
        <position position="178"/>
    </location>
    <ligand>
        <name>FMN</name>
        <dbReference type="ChEBI" id="CHEBI:58210"/>
    </ligand>
</feature>
<feature type="binding site" evidence="1">
    <location>
        <position position="203"/>
    </location>
    <ligand>
        <name>FMN</name>
        <dbReference type="ChEBI" id="CHEBI:58210"/>
    </ligand>
</feature>
<feature type="binding site" evidence="1">
    <location>
        <position position="208"/>
    </location>
    <ligand>
        <name>FMN</name>
        <dbReference type="ChEBI" id="CHEBI:58210"/>
    </ligand>
</feature>
<feature type="binding site" evidence="1">
    <location>
        <begin position="252"/>
        <end position="254"/>
    </location>
    <ligand>
        <name>FMN</name>
        <dbReference type="ChEBI" id="CHEBI:58210"/>
    </ligand>
</feature>
<feature type="binding site" evidence="1">
    <location>
        <begin position="273"/>
        <end position="274"/>
    </location>
    <ligand>
        <name>FMN</name>
        <dbReference type="ChEBI" id="CHEBI:58210"/>
    </ligand>
</feature>
<reference key="1">
    <citation type="journal article" date="2005" name="J. Infect. Dis.">
        <title>Genome sequence of a serotype M28 strain of group A Streptococcus: potential new insights into puerperal sepsis and bacterial disease specificity.</title>
        <authorList>
            <person name="Green N.M."/>
            <person name="Zhang S."/>
            <person name="Porcella S.F."/>
            <person name="Nagiec M.J."/>
            <person name="Barbian K.D."/>
            <person name="Beres S.B."/>
            <person name="Lefebvre R.B."/>
            <person name="Musser J.M."/>
        </authorList>
    </citation>
    <scope>NUCLEOTIDE SEQUENCE [LARGE SCALE GENOMIC DNA]</scope>
    <source>
        <strain>MGAS6180</strain>
    </source>
</reference>
<gene>
    <name evidence="1" type="primary">fni</name>
    <name type="ordered locus">M28_Spy0665</name>
</gene>
<organism>
    <name type="scientific">Streptococcus pyogenes serotype M28 (strain MGAS6180)</name>
    <dbReference type="NCBI Taxonomy" id="319701"/>
    <lineage>
        <taxon>Bacteria</taxon>
        <taxon>Bacillati</taxon>
        <taxon>Bacillota</taxon>
        <taxon>Bacilli</taxon>
        <taxon>Lactobacillales</taxon>
        <taxon>Streptococcaceae</taxon>
        <taxon>Streptococcus</taxon>
    </lineage>
</organism>
<evidence type="ECO:0000255" key="1">
    <source>
        <dbReference type="HAMAP-Rule" id="MF_00354"/>
    </source>
</evidence>
<evidence type="ECO:0000305" key="2"/>
<protein>
    <recommendedName>
        <fullName evidence="1">Isopentenyl-diphosphate delta-isomerase</fullName>
        <shortName evidence="1">IPP isomerase</shortName>
        <ecNumber evidence="1">5.3.3.2</ecNumber>
    </recommendedName>
    <alternativeName>
        <fullName evidence="1">Isopentenyl diphosphate:dimethylallyl diphosphate isomerase</fullName>
    </alternativeName>
    <alternativeName>
        <fullName evidence="1">Isopentenyl pyrophosphate isomerase</fullName>
    </alternativeName>
    <alternativeName>
        <fullName evidence="1">Type 2 isopentenyl diphosphate isomerase</fullName>
        <shortName evidence="1">IDI-2</shortName>
    </alternativeName>
</protein>
<comment type="function">
    <text evidence="1">Involved in the biosynthesis of isoprenoids. Catalyzes the 1,3-allylic rearrangement of the homoallylic substrate isopentenyl (IPP) to its allylic isomer, dimethylallyl diphosphate (DMAPP).</text>
</comment>
<comment type="catalytic activity">
    <reaction evidence="1">
        <text>isopentenyl diphosphate = dimethylallyl diphosphate</text>
        <dbReference type="Rhea" id="RHEA:23284"/>
        <dbReference type="ChEBI" id="CHEBI:57623"/>
        <dbReference type="ChEBI" id="CHEBI:128769"/>
        <dbReference type="EC" id="5.3.3.2"/>
    </reaction>
</comment>
<comment type="cofactor">
    <cofactor evidence="1">
        <name>FMN</name>
        <dbReference type="ChEBI" id="CHEBI:58210"/>
    </cofactor>
</comment>
<comment type="cofactor">
    <cofactor evidence="1">
        <name>NADPH</name>
        <dbReference type="ChEBI" id="CHEBI:57783"/>
    </cofactor>
</comment>
<comment type="cofactor">
    <cofactor evidence="1">
        <name>Mg(2+)</name>
        <dbReference type="ChEBI" id="CHEBI:18420"/>
    </cofactor>
</comment>
<comment type="subunit">
    <text evidence="1">Homooctamer. Dimer of tetramers.</text>
</comment>
<comment type="subcellular location">
    <subcellularLocation>
        <location evidence="1">Cytoplasm</location>
    </subcellularLocation>
</comment>
<comment type="similarity">
    <text evidence="1">Belongs to the IPP isomerase type 2 family.</text>
</comment>
<comment type="sequence caution" evidence="2">
    <conflict type="erroneous initiation">
        <sequence resource="EMBL-CDS" id="AAX71778"/>
    </conflict>
    <text>Extended N-terminus.</text>
</comment>
<name>IDI2_STRPM</name>